<evidence type="ECO:0000255" key="1">
    <source>
        <dbReference type="HAMAP-Rule" id="MF_00086"/>
    </source>
</evidence>
<accession>B7N7J5</accession>
<dbReference type="EC" id="2.5.1.6" evidence="1"/>
<dbReference type="EMBL" id="CU928163">
    <property type="protein sequence ID" value="CAR14457.1"/>
    <property type="molecule type" value="Genomic_DNA"/>
</dbReference>
<dbReference type="RefSeq" id="WP_001062128.1">
    <property type="nucleotide sequence ID" value="NC_011751.1"/>
</dbReference>
<dbReference type="RefSeq" id="YP_002413976.1">
    <property type="nucleotide sequence ID" value="NC_011751.1"/>
</dbReference>
<dbReference type="SMR" id="B7N7J5"/>
<dbReference type="STRING" id="585056.ECUMN_3294"/>
<dbReference type="GeneID" id="93779055"/>
<dbReference type="KEGG" id="eum:ECUMN_3294"/>
<dbReference type="PATRIC" id="fig|585056.7.peg.3472"/>
<dbReference type="HOGENOM" id="CLU_041802_1_1_6"/>
<dbReference type="UniPathway" id="UPA00315">
    <property type="reaction ID" value="UER00080"/>
</dbReference>
<dbReference type="Proteomes" id="UP000007097">
    <property type="component" value="Chromosome"/>
</dbReference>
<dbReference type="GO" id="GO:0005737">
    <property type="term" value="C:cytoplasm"/>
    <property type="evidence" value="ECO:0007669"/>
    <property type="project" value="UniProtKB-SubCell"/>
</dbReference>
<dbReference type="GO" id="GO:0005524">
    <property type="term" value="F:ATP binding"/>
    <property type="evidence" value="ECO:0007669"/>
    <property type="project" value="UniProtKB-UniRule"/>
</dbReference>
<dbReference type="GO" id="GO:0000287">
    <property type="term" value="F:magnesium ion binding"/>
    <property type="evidence" value="ECO:0007669"/>
    <property type="project" value="UniProtKB-UniRule"/>
</dbReference>
<dbReference type="GO" id="GO:0004478">
    <property type="term" value="F:methionine adenosyltransferase activity"/>
    <property type="evidence" value="ECO:0007669"/>
    <property type="project" value="UniProtKB-UniRule"/>
</dbReference>
<dbReference type="GO" id="GO:0006730">
    <property type="term" value="P:one-carbon metabolic process"/>
    <property type="evidence" value="ECO:0007669"/>
    <property type="project" value="UniProtKB-KW"/>
</dbReference>
<dbReference type="GO" id="GO:0006556">
    <property type="term" value="P:S-adenosylmethionine biosynthetic process"/>
    <property type="evidence" value="ECO:0007669"/>
    <property type="project" value="UniProtKB-UniRule"/>
</dbReference>
<dbReference type="CDD" id="cd18079">
    <property type="entry name" value="S-AdoMet_synt"/>
    <property type="match status" value="1"/>
</dbReference>
<dbReference type="FunFam" id="3.30.300.10:FF:000001">
    <property type="entry name" value="S-adenosylmethionine synthase"/>
    <property type="match status" value="1"/>
</dbReference>
<dbReference type="FunFam" id="3.30.300.10:FF:000003">
    <property type="entry name" value="S-adenosylmethionine synthase"/>
    <property type="match status" value="1"/>
</dbReference>
<dbReference type="Gene3D" id="3.30.300.10">
    <property type="match status" value="3"/>
</dbReference>
<dbReference type="HAMAP" id="MF_00086">
    <property type="entry name" value="S_AdoMet_synth1"/>
    <property type="match status" value="1"/>
</dbReference>
<dbReference type="InterPro" id="IPR022631">
    <property type="entry name" value="ADOMET_SYNTHASE_CS"/>
</dbReference>
<dbReference type="InterPro" id="IPR022630">
    <property type="entry name" value="S-AdoMet_synt_C"/>
</dbReference>
<dbReference type="InterPro" id="IPR022629">
    <property type="entry name" value="S-AdoMet_synt_central"/>
</dbReference>
<dbReference type="InterPro" id="IPR022628">
    <property type="entry name" value="S-AdoMet_synt_N"/>
</dbReference>
<dbReference type="InterPro" id="IPR002133">
    <property type="entry name" value="S-AdoMet_synthetase"/>
</dbReference>
<dbReference type="InterPro" id="IPR022636">
    <property type="entry name" value="S-AdoMet_synthetase_sfam"/>
</dbReference>
<dbReference type="NCBIfam" id="TIGR01034">
    <property type="entry name" value="metK"/>
    <property type="match status" value="1"/>
</dbReference>
<dbReference type="PANTHER" id="PTHR11964">
    <property type="entry name" value="S-ADENOSYLMETHIONINE SYNTHETASE"/>
    <property type="match status" value="1"/>
</dbReference>
<dbReference type="Pfam" id="PF02773">
    <property type="entry name" value="S-AdoMet_synt_C"/>
    <property type="match status" value="1"/>
</dbReference>
<dbReference type="Pfam" id="PF02772">
    <property type="entry name" value="S-AdoMet_synt_M"/>
    <property type="match status" value="1"/>
</dbReference>
<dbReference type="Pfam" id="PF00438">
    <property type="entry name" value="S-AdoMet_synt_N"/>
    <property type="match status" value="1"/>
</dbReference>
<dbReference type="PIRSF" id="PIRSF000497">
    <property type="entry name" value="MAT"/>
    <property type="match status" value="1"/>
</dbReference>
<dbReference type="SUPFAM" id="SSF55973">
    <property type="entry name" value="S-adenosylmethionine synthetase"/>
    <property type="match status" value="3"/>
</dbReference>
<dbReference type="PROSITE" id="PS00376">
    <property type="entry name" value="ADOMET_SYNTHASE_1"/>
    <property type="match status" value="1"/>
</dbReference>
<dbReference type="PROSITE" id="PS00377">
    <property type="entry name" value="ADOMET_SYNTHASE_2"/>
    <property type="match status" value="1"/>
</dbReference>
<reference key="1">
    <citation type="journal article" date="2009" name="PLoS Genet.">
        <title>Organised genome dynamics in the Escherichia coli species results in highly diverse adaptive paths.</title>
        <authorList>
            <person name="Touchon M."/>
            <person name="Hoede C."/>
            <person name="Tenaillon O."/>
            <person name="Barbe V."/>
            <person name="Baeriswyl S."/>
            <person name="Bidet P."/>
            <person name="Bingen E."/>
            <person name="Bonacorsi S."/>
            <person name="Bouchier C."/>
            <person name="Bouvet O."/>
            <person name="Calteau A."/>
            <person name="Chiapello H."/>
            <person name="Clermont O."/>
            <person name="Cruveiller S."/>
            <person name="Danchin A."/>
            <person name="Diard M."/>
            <person name="Dossat C."/>
            <person name="Karoui M.E."/>
            <person name="Frapy E."/>
            <person name="Garry L."/>
            <person name="Ghigo J.M."/>
            <person name="Gilles A.M."/>
            <person name="Johnson J."/>
            <person name="Le Bouguenec C."/>
            <person name="Lescat M."/>
            <person name="Mangenot S."/>
            <person name="Martinez-Jehanne V."/>
            <person name="Matic I."/>
            <person name="Nassif X."/>
            <person name="Oztas S."/>
            <person name="Petit M.A."/>
            <person name="Pichon C."/>
            <person name="Rouy Z."/>
            <person name="Ruf C.S."/>
            <person name="Schneider D."/>
            <person name="Tourret J."/>
            <person name="Vacherie B."/>
            <person name="Vallenet D."/>
            <person name="Medigue C."/>
            <person name="Rocha E.P.C."/>
            <person name="Denamur E."/>
        </authorList>
    </citation>
    <scope>NUCLEOTIDE SEQUENCE [LARGE SCALE GENOMIC DNA]</scope>
    <source>
        <strain>UMN026 / ExPEC</strain>
    </source>
</reference>
<name>METK_ECOLU</name>
<comment type="function">
    <text evidence="1">Catalyzes the formation of S-adenosylmethionine (AdoMet) from methionine and ATP. The overall synthetic reaction is composed of two sequential steps, AdoMet formation and the subsequent tripolyphosphate hydrolysis which occurs prior to release of AdoMet from the enzyme.</text>
</comment>
<comment type="catalytic activity">
    <reaction evidence="1">
        <text>L-methionine + ATP + H2O = S-adenosyl-L-methionine + phosphate + diphosphate</text>
        <dbReference type="Rhea" id="RHEA:21080"/>
        <dbReference type="ChEBI" id="CHEBI:15377"/>
        <dbReference type="ChEBI" id="CHEBI:30616"/>
        <dbReference type="ChEBI" id="CHEBI:33019"/>
        <dbReference type="ChEBI" id="CHEBI:43474"/>
        <dbReference type="ChEBI" id="CHEBI:57844"/>
        <dbReference type="ChEBI" id="CHEBI:59789"/>
        <dbReference type="EC" id="2.5.1.6"/>
    </reaction>
</comment>
<comment type="cofactor">
    <cofactor evidence="1">
        <name>Mg(2+)</name>
        <dbReference type="ChEBI" id="CHEBI:18420"/>
    </cofactor>
    <text evidence="1">Binds 2 divalent ions per subunit.</text>
</comment>
<comment type="cofactor">
    <cofactor evidence="1">
        <name>K(+)</name>
        <dbReference type="ChEBI" id="CHEBI:29103"/>
    </cofactor>
    <text evidence="1">Binds 1 potassium ion per subunit.</text>
</comment>
<comment type="pathway">
    <text evidence="1">Amino-acid biosynthesis; S-adenosyl-L-methionine biosynthesis; S-adenosyl-L-methionine from L-methionine: step 1/1.</text>
</comment>
<comment type="subunit">
    <text evidence="1">Homotetramer; dimer of dimers.</text>
</comment>
<comment type="subcellular location">
    <subcellularLocation>
        <location evidence="1">Cytoplasm</location>
    </subcellularLocation>
</comment>
<comment type="similarity">
    <text evidence="1">Belongs to the AdoMet synthase family.</text>
</comment>
<feature type="chain" id="PRO_1000196710" description="S-adenosylmethionine synthase">
    <location>
        <begin position="1"/>
        <end position="384"/>
    </location>
</feature>
<feature type="region of interest" description="Flexible loop" evidence="1">
    <location>
        <begin position="99"/>
        <end position="109"/>
    </location>
</feature>
<feature type="binding site" description="in other chain" evidence="1">
    <location>
        <position position="15"/>
    </location>
    <ligand>
        <name>ATP</name>
        <dbReference type="ChEBI" id="CHEBI:30616"/>
        <note>ligand shared between two neighboring subunits</note>
    </ligand>
</feature>
<feature type="binding site" evidence="1">
    <location>
        <position position="17"/>
    </location>
    <ligand>
        <name>Mg(2+)</name>
        <dbReference type="ChEBI" id="CHEBI:18420"/>
    </ligand>
</feature>
<feature type="binding site" evidence="1">
    <location>
        <position position="43"/>
    </location>
    <ligand>
        <name>K(+)</name>
        <dbReference type="ChEBI" id="CHEBI:29103"/>
    </ligand>
</feature>
<feature type="binding site" description="in other chain" evidence="1">
    <location>
        <position position="56"/>
    </location>
    <ligand>
        <name>L-methionine</name>
        <dbReference type="ChEBI" id="CHEBI:57844"/>
        <note>ligand shared between two neighboring subunits</note>
    </ligand>
</feature>
<feature type="binding site" description="in other chain" evidence="1">
    <location>
        <position position="99"/>
    </location>
    <ligand>
        <name>L-methionine</name>
        <dbReference type="ChEBI" id="CHEBI:57844"/>
        <note>ligand shared between two neighboring subunits</note>
    </ligand>
</feature>
<feature type="binding site" description="in other chain" evidence="1">
    <location>
        <begin position="164"/>
        <end position="166"/>
    </location>
    <ligand>
        <name>ATP</name>
        <dbReference type="ChEBI" id="CHEBI:30616"/>
        <note>ligand shared between two neighboring subunits</note>
    </ligand>
</feature>
<feature type="binding site" description="in other chain" evidence="1">
    <location>
        <begin position="230"/>
        <end position="231"/>
    </location>
    <ligand>
        <name>ATP</name>
        <dbReference type="ChEBI" id="CHEBI:30616"/>
        <note>ligand shared between two neighboring subunits</note>
    </ligand>
</feature>
<feature type="binding site" evidence="1">
    <location>
        <position position="239"/>
    </location>
    <ligand>
        <name>ATP</name>
        <dbReference type="ChEBI" id="CHEBI:30616"/>
        <note>ligand shared between two neighboring subunits</note>
    </ligand>
</feature>
<feature type="binding site" evidence="1">
    <location>
        <position position="239"/>
    </location>
    <ligand>
        <name>L-methionine</name>
        <dbReference type="ChEBI" id="CHEBI:57844"/>
        <note>ligand shared between two neighboring subunits</note>
    </ligand>
</feature>
<feature type="binding site" description="in other chain" evidence="1">
    <location>
        <begin position="245"/>
        <end position="246"/>
    </location>
    <ligand>
        <name>ATP</name>
        <dbReference type="ChEBI" id="CHEBI:30616"/>
        <note>ligand shared between two neighboring subunits</note>
    </ligand>
</feature>
<feature type="binding site" evidence="1">
    <location>
        <position position="262"/>
    </location>
    <ligand>
        <name>ATP</name>
        <dbReference type="ChEBI" id="CHEBI:30616"/>
        <note>ligand shared between two neighboring subunits</note>
    </ligand>
</feature>
<feature type="binding site" evidence="1">
    <location>
        <position position="266"/>
    </location>
    <ligand>
        <name>ATP</name>
        <dbReference type="ChEBI" id="CHEBI:30616"/>
        <note>ligand shared between two neighboring subunits</note>
    </ligand>
</feature>
<feature type="binding site" description="in other chain" evidence="1">
    <location>
        <position position="270"/>
    </location>
    <ligand>
        <name>L-methionine</name>
        <dbReference type="ChEBI" id="CHEBI:57844"/>
        <note>ligand shared between two neighboring subunits</note>
    </ligand>
</feature>
<organism>
    <name type="scientific">Escherichia coli O17:K52:H18 (strain UMN026 / ExPEC)</name>
    <dbReference type="NCBI Taxonomy" id="585056"/>
    <lineage>
        <taxon>Bacteria</taxon>
        <taxon>Pseudomonadati</taxon>
        <taxon>Pseudomonadota</taxon>
        <taxon>Gammaproteobacteria</taxon>
        <taxon>Enterobacterales</taxon>
        <taxon>Enterobacteriaceae</taxon>
        <taxon>Escherichia</taxon>
    </lineage>
</organism>
<gene>
    <name evidence="1" type="primary">metK</name>
    <name type="ordered locus">ECUMN_3294</name>
</gene>
<sequence length="384" mass="41952">MAKHLFTSESVSEGHPDKIADQISDAVLDAILEQDPKARVACETYVKTGMVLVGGEITTSAWVDIEEITRNTVREIGYVHSDMGFDANSCAVLSAIGKQSPDINQGVDRADPLEQGAGDQGLMFGYATNETDVLMPAPITYAHRLVQRQAEVRKNGTLPWLRPDAKSQVTFQYDDGKIVGIDAVVLSTQHSEEIDQKSLQEAVMEEIIKPILPAEWLTSATKFFINPTGRFVIGGPMGDCGLTGRKIIVDTYGGMARHGGGAFSGKDPSKVDRSAAYAARYVAKNIVAAGLADRCEIQVSYAIGVAEPTSIMVETFGTEKVPSEQLTLLVREFFDLRPYGLIQMLDLLHPIYKETAAYGHFGREHFPWEKTDKAQLLRDAAGLK</sequence>
<keyword id="KW-0067">ATP-binding</keyword>
<keyword id="KW-0963">Cytoplasm</keyword>
<keyword id="KW-0460">Magnesium</keyword>
<keyword id="KW-0479">Metal-binding</keyword>
<keyword id="KW-0547">Nucleotide-binding</keyword>
<keyword id="KW-0554">One-carbon metabolism</keyword>
<keyword id="KW-0630">Potassium</keyword>
<keyword id="KW-0808">Transferase</keyword>
<proteinExistence type="inferred from homology"/>
<protein>
    <recommendedName>
        <fullName evidence="1">S-adenosylmethionine synthase</fullName>
        <shortName evidence="1">AdoMet synthase</shortName>
        <ecNumber evidence="1">2.5.1.6</ecNumber>
    </recommendedName>
    <alternativeName>
        <fullName evidence="1">MAT</fullName>
    </alternativeName>
    <alternativeName>
        <fullName evidence="1">Methionine adenosyltransferase</fullName>
    </alternativeName>
</protein>